<dbReference type="EC" id="3.1.11.6" evidence="1"/>
<dbReference type="EMBL" id="CP000829">
    <property type="protein sequence ID" value="ACI61444.1"/>
    <property type="molecule type" value="Genomic_DNA"/>
</dbReference>
<dbReference type="SMR" id="B5XM82"/>
<dbReference type="KEGG" id="soz:Spy49_1156c"/>
<dbReference type="HOGENOM" id="CLU_145918_3_2_9"/>
<dbReference type="Proteomes" id="UP000001039">
    <property type="component" value="Chromosome"/>
</dbReference>
<dbReference type="GO" id="GO:0005829">
    <property type="term" value="C:cytosol"/>
    <property type="evidence" value="ECO:0007669"/>
    <property type="project" value="TreeGrafter"/>
</dbReference>
<dbReference type="GO" id="GO:0009318">
    <property type="term" value="C:exodeoxyribonuclease VII complex"/>
    <property type="evidence" value="ECO:0007669"/>
    <property type="project" value="InterPro"/>
</dbReference>
<dbReference type="GO" id="GO:0008855">
    <property type="term" value="F:exodeoxyribonuclease VII activity"/>
    <property type="evidence" value="ECO:0007669"/>
    <property type="project" value="UniProtKB-UniRule"/>
</dbReference>
<dbReference type="GO" id="GO:0006308">
    <property type="term" value="P:DNA catabolic process"/>
    <property type="evidence" value="ECO:0007669"/>
    <property type="project" value="UniProtKB-UniRule"/>
</dbReference>
<dbReference type="Gene3D" id="1.10.287.1040">
    <property type="entry name" value="Exonuclease VII, small subunit"/>
    <property type="match status" value="1"/>
</dbReference>
<dbReference type="HAMAP" id="MF_00337">
    <property type="entry name" value="Exonuc_7_S"/>
    <property type="match status" value="1"/>
</dbReference>
<dbReference type="InterPro" id="IPR003761">
    <property type="entry name" value="Exonuc_VII_S"/>
</dbReference>
<dbReference type="InterPro" id="IPR037004">
    <property type="entry name" value="Exonuc_VII_ssu_sf"/>
</dbReference>
<dbReference type="NCBIfam" id="NF002138">
    <property type="entry name" value="PRK00977.1-2"/>
    <property type="match status" value="1"/>
</dbReference>
<dbReference type="NCBIfam" id="TIGR01280">
    <property type="entry name" value="xseB"/>
    <property type="match status" value="1"/>
</dbReference>
<dbReference type="PANTHER" id="PTHR34137">
    <property type="entry name" value="EXODEOXYRIBONUCLEASE 7 SMALL SUBUNIT"/>
    <property type="match status" value="1"/>
</dbReference>
<dbReference type="PANTHER" id="PTHR34137:SF1">
    <property type="entry name" value="EXODEOXYRIBONUCLEASE 7 SMALL SUBUNIT"/>
    <property type="match status" value="1"/>
</dbReference>
<dbReference type="Pfam" id="PF02609">
    <property type="entry name" value="Exonuc_VII_S"/>
    <property type="match status" value="1"/>
</dbReference>
<dbReference type="PIRSF" id="PIRSF006488">
    <property type="entry name" value="Exonuc_VII_S"/>
    <property type="match status" value="1"/>
</dbReference>
<dbReference type="SUPFAM" id="SSF116842">
    <property type="entry name" value="XseB-like"/>
    <property type="match status" value="1"/>
</dbReference>
<evidence type="ECO:0000255" key="1">
    <source>
        <dbReference type="HAMAP-Rule" id="MF_00337"/>
    </source>
</evidence>
<sequence>MSKTKTFEENLQDLETIVNKLENGDVPLEEAISEFQKGMLLSKELQKTLQAAEKTLVKVMQADGTEVDMDD</sequence>
<protein>
    <recommendedName>
        <fullName evidence="1">Exodeoxyribonuclease 7 small subunit</fullName>
        <ecNumber evidence="1">3.1.11.6</ecNumber>
    </recommendedName>
    <alternativeName>
        <fullName evidence="1">Exodeoxyribonuclease VII small subunit</fullName>
        <shortName evidence="1">Exonuclease VII small subunit</shortName>
    </alternativeName>
</protein>
<gene>
    <name evidence="1" type="primary">xseB</name>
    <name type="ordered locus">Spy49_1156c</name>
</gene>
<keyword id="KW-0963">Cytoplasm</keyword>
<keyword id="KW-0269">Exonuclease</keyword>
<keyword id="KW-0378">Hydrolase</keyword>
<keyword id="KW-0540">Nuclease</keyword>
<comment type="function">
    <text evidence="1">Bidirectionally degrades single-stranded DNA into large acid-insoluble oligonucleotides, which are then degraded further into small acid-soluble oligonucleotides.</text>
</comment>
<comment type="catalytic activity">
    <reaction evidence="1">
        <text>Exonucleolytic cleavage in either 5'- to 3'- or 3'- to 5'-direction to yield nucleoside 5'-phosphates.</text>
        <dbReference type="EC" id="3.1.11.6"/>
    </reaction>
</comment>
<comment type="subunit">
    <text evidence="1">Heterooligomer composed of large and small subunits.</text>
</comment>
<comment type="subcellular location">
    <subcellularLocation>
        <location evidence="1">Cytoplasm</location>
    </subcellularLocation>
</comment>
<comment type="similarity">
    <text evidence="1">Belongs to the XseB family.</text>
</comment>
<reference key="1">
    <citation type="journal article" date="2008" name="J. Bacteriol.">
        <title>Genome sequence of a nephritogenic and highly transformable M49 strain of Streptococcus pyogenes.</title>
        <authorList>
            <person name="McShan W.M."/>
            <person name="Ferretti J.J."/>
            <person name="Karasawa T."/>
            <person name="Suvorov A.N."/>
            <person name="Lin S."/>
            <person name="Qin B."/>
            <person name="Jia H."/>
            <person name="Kenton S."/>
            <person name="Najar F."/>
            <person name="Wu H."/>
            <person name="Scott J."/>
            <person name="Roe B.A."/>
            <person name="Savic D.J."/>
        </authorList>
    </citation>
    <scope>NUCLEOTIDE SEQUENCE [LARGE SCALE GENOMIC DNA]</scope>
    <source>
        <strain>NZ131</strain>
    </source>
</reference>
<name>EX7S_STRPZ</name>
<organism>
    <name type="scientific">Streptococcus pyogenes serotype M49 (strain NZ131)</name>
    <dbReference type="NCBI Taxonomy" id="471876"/>
    <lineage>
        <taxon>Bacteria</taxon>
        <taxon>Bacillati</taxon>
        <taxon>Bacillota</taxon>
        <taxon>Bacilli</taxon>
        <taxon>Lactobacillales</taxon>
        <taxon>Streptococcaceae</taxon>
        <taxon>Streptococcus</taxon>
    </lineage>
</organism>
<proteinExistence type="inferred from homology"/>
<feature type="chain" id="PRO_1000119964" description="Exodeoxyribonuclease 7 small subunit">
    <location>
        <begin position="1"/>
        <end position="71"/>
    </location>
</feature>
<accession>B5XM82</accession>